<name>RLMN_CAUVC</name>
<proteinExistence type="inferred from homology"/>
<keyword id="KW-0004">4Fe-4S</keyword>
<keyword id="KW-0963">Cytoplasm</keyword>
<keyword id="KW-1015">Disulfide bond</keyword>
<keyword id="KW-0408">Iron</keyword>
<keyword id="KW-0411">Iron-sulfur</keyword>
<keyword id="KW-0479">Metal-binding</keyword>
<keyword id="KW-0489">Methyltransferase</keyword>
<keyword id="KW-1185">Reference proteome</keyword>
<keyword id="KW-0698">rRNA processing</keyword>
<keyword id="KW-0949">S-adenosyl-L-methionine</keyword>
<keyword id="KW-0808">Transferase</keyword>
<keyword id="KW-0819">tRNA processing</keyword>
<organism>
    <name type="scientific">Caulobacter vibrioides (strain ATCC 19089 / CIP 103742 / CB 15)</name>
    <name type="common">Caulobacter crescentus</name>
    <dbReference type="NCBI Taxonomy" id="190650"/>
    <lineage>
        <taxon>Bacteria</taxon>
        <taxon>Pseudomonadati</taxon>
        <taxon>Pseudomonadota</taxon>
        <taxon>Alphaproteobacteria</taxon>
        <taxon>Caulobacterales</taxon>
        <taxon>Caulobacteraceae</taxon>
        <taxon>Caulobacter</taxon>
    </lineage>
</organism>
<evidence type="ECO:0000255" key="1">
    <source>
        <dbReference type="HAMAP-Rule" id="MF_01849"/>
    </source>
</evidence>
<evidence type="ECO:0000255" key="2">
    <source>
        <dbReference type="PROSITE-ProRule" id="PRU01266"/>
    </source>
</evidence>
<feature type="chain" id="PRO_0000350100" description="Dual-specificity RNA methyltransferase RlmN">
    <location>
        <begin position="1"/>
        <end position="404"/>
    </location>
</feature>
<feature type="domain" description="Radical SAM core" evidence="2">
    <location>
        <begin position="125"/>
        <end position="357"/>
    </location>
</feature>
<feature type="active site" description="Proton acceptor" evidence="1">
    <location>
        <position position="118"/>
    </location>
</feature>
<feature type="active site" description="S-methylcysteine intermediate" evidence="1">
    <location>
        <position position="368"/>
    </location>
</feature>
<feature type="binding site" evidence="1">
    <location>
        <position position="139"/>
    </location>
    <ligand>
        <name>[4Fe-4S] cluster</name>
        <dbReference type="ChEBI" id="CHEBI:49883"/>
        <note>4Fe-4S-S-AdoMet</note>
    </ligand>
</feature>
<feature type="binding site" evidence="1">
    <location>
        <position position="143"/>
    </location>
    <ligand>
        <name>[4Fe-4S] cluster</name>
        <dbReference type="ChEBI" id="CHEBI:49883"/>
        <note>4Fe-4S-S-AdoMet</note>
    </ligand>
</feature>
<feature type="binding site" evidence="1">
    <location>
        <position position="146"/>
    </location>
    <ligand>
        <name>[4Fe-4S] cluster</name>
        <dbReference type="ChEBI" id="CHEBI:49883"/>
        <note>4Fe-4S-S-AdoMet</note>
    </ligand>
</feature>
<feature type="binding site" evidence="1">
    <location>
        <begin position="194"/>
        <end position="195"/>
    </location>
    <ligand>
        <name>S-adenosyl-L-methionine</name>
        <dbReference type="ChEBI" id="CHEBI:59789"/>
    </ligand>
</feature>
<feature type="binding site" evidence="1">
    <location>
        <position position="226"/>
    </location>
    <ligand>
        <name>S-adenosyl-L-methionine</name>
        <dbReference type="ChEBI" id="CHEBI:59789"/>
    </ligand>
</feature>
<feature type="binding site" evidence="1">
    <location>
        <begin position="248"/>
        <end position="250"/>
    </location>
    <ligand>
        <name>S-adenosyl-L-methionine</name>
        <dbReference type="ChEBI" id="CHEBI:59789"/>
    </ligand>
</feature>
<feature type="binding site" evidence="1">
    <location>
        <position position="325"/>
    </location>
    <ligand>
        <name>S-adenosyl-L-methionine</name>
        <dbReference type="ChEBI" id="CHEBI:59789"/>
    </ligand>
</feature>
<feature type="disulfide bond" description="(transient)" evidence="1">
    <location>
        <begin position="132"/>
        <end position="368"/>
    </location>
</feature>
<sequence length="404" mass="43736">MSVTLDLSRVSSDAAPATPVTKPLINLSGLTRPQLVAALVESGVVEHGKAKMRATQIFRWMHHRGVTDFADMSDVAKETRARLAEAFTIARPEIVERQVSKDGTRKWLIRMAPGIEVESVYIPGVGRAGALCVSSQVGCTLNCSFCHTGTQPLVRNLTAAEIVAQVQVAKDDLAEWPSDKEDRQLSNIVFMGMGEPLYNLGQVADAIEIISDNEGIAISRRRITVSTSGVVPMLEKLGSTTQAMLAISLHATNDPLRDVLVPLNKKYPIAELMAGIRAYPGLSNARRVTFEYVMLKGVNDSPEEARALVKLIKGIPAKINLIPFNPWPGSDYQCSDWATIEAFAAILNKAGYSSPIRTPRGRDILAACGQLKSESEKVRASALRKLSLAAMAGVLSDDDEDETA</sequence>
<dbReference type="EC" id="2.1.1.192" evidence="1"/>
<dbReference type="EMBL" id="AE005673">
    <property type="protein sequence ID" value="AAK22121.1"/>
    <property type="molecule type" value="Genomic_DNA"/>
</dbReference>
<dbReference type="PIR" id="E87265">
    <property type="entry name" value="E87265"/>
</dbReference>
<dbReference type="RefSeq" id="NP_418953.1">
    <property type="nucleotide sequence ID" value="NC_002696.2"/>
</dbReference>
<dbReference type="RefSeq" id="WP_010918023.1">
    <property type="nucleotide sequence ID" value="NC_002696.2"/>
</dbReference>
<dbReference type="SMR" id="Q9ABT6"/>
<dbReference type="STRING" id="190650.CC_0134"/>
<dbReference type="EnsemblBacteria" id="AAK22121">
    <property type="protein sequence ID" value="AAK22121"/>
    <property type="gene ID" value="CC_0134"/>
</dbReference>
<dbReference type="KEGG" id="ccr:CC_0134"/>
<dbReference type="PATRIC" id="fig|190650.5.peg.131"/>
<dbReference type="eggNOG" id="COG0820">
    <property type="taxonomic scope" value="Bacteria"/>
</dbReference>
<dbReference type="HOGENOM" id="CLU_029101_0_0_5"/>
<dbReference type="BioCyc" id="CAULO:CC0134-MONOMER"/>
<dbReference type="Proteomes" id="UP000001816">
    <property type="component" value="Chromosome"/>
</dbReference>
<dbReference type="GO" id="GO:0005737">
    <property type="term" value="C:cytoplasm"/>
    <property type="evidence" value="ECO:0007669"/>
    <property type="project" value="UniProtKB-SubCell"/>
</dbReference>
<dbReference type="GO" id="GO:0051539">
    <property type="term" value="F:4 iron, 4 sulfur cluster binding"/>
    <property type="evidence" value="ECO:0007669"/>
    <property type="project" value="UniProtKB-UniRule"/>
</dbReference>
<dbReference type="GO" id="GO:0046872">
    <property type="term" value="F:metal ion binding"/>
    <property type="evidence" value="ECO:0007669"/>
    <property type="project" value="UniProtKB-KW"/>
</dbReference>
<dbReference type="GO" id="GO:0070040">
    <property type="term" value="F:rRNA (adenine(2503)-C2-)-methyltransferase activity"/>
    <property type="evidence" value="ECO:0007669"/>
    <property type="project" value="UniProtKB-UniRule"/>
</dbReference>
<dbReference type="GO" id="GO:0019843">
    <property type="term" value="F:rRNA binding"/>
    <property type="evidence" value="ECO:0007669"/>
    <property type="project" value="UniProtKB-UniRule"/>
</dbReference>
<dbReference type="GO" id="GO:0002935">
    <property type="term" value="F:tRNA (adenine(37)-C2)-methyltransferase activity"/>
    <property type="evidence" value="ECO:0007669"/>
    <property type="project" value="UniProtKB-UniRule"/>
</dbReference>
<dbReference type="GO" id="GO:0000049">
    <property type="term" value="F:tRNA binding"/>
    <property type="evidence" value="ECO:0007669"/>
    <property type="project" value="UniProtKB-UniRule"/>
</dbReference>
<dbReference type="GO" id="GO:0070475">
    <property type="term" value="P:rRNA base methylation"/>
    <property type="evidence" value="ECO:0007669"/>
    <property type="project" value="UniProtKB-UniRule"/>
</dbReference>
<dbReference type="GO" id="GO:0030488">
    <property type="term" value="P:tRNA methylation"/>
    <property type="evidence" value="ECO:0007669"/>
    <property type="project" value="UniProtKB-UniRule"/>
</dbReference>
<dbReference type="CDD" id="cd01335">
    <property type="entry name" value="Radical_SAM"/>
    <property type="match status" value="1"/>
</dbReference>
<dbReference type="FunFam" id="3.20.20.70:FF:000008">
    <property type="entry name" value="Dual-specificity RNA methyltransferase RlmN"/>
    <property type="match status" value="1"/>
</dbReference>
<dbReference type="Gene3D" id="1.10.150.530">
    <property type="match status" value="1"/>
</dbReference>
<dbReference type="Gene3D" id="3.20.20.70">
    <property type="entry name" value="Aldolase class I"/>
    <property type="match status" value="1"/>
</dbReference>
<dbReference type="HAMAP" id="MF_01849">
    <property type="entry name" value="RNA_methyltr_RlmN"/>
    <property type="match status" value="1"/>
</dbReference>
<dbReference type="InterPro" id="IPR013785">
    <property type="entry name" value="Aldolase_TIM"/>
</dbReference>
<dbReference type="InterPro" id="IPR040072">
    <property type="entry name" value="Methyltransferase_A"/>
</dbReference>
<dbReference type="InterPro" id="IPR048641">
    <property type="entry name" value="RlmN_N"/>
</dbReference>
<dbReference type="InterPro" id="IPR027492">
    <property type="entry name" value="RNA_MTrfase_RlmN"/>
</dbReference>
<dbReference type="InterPro" id="IPR004383">
    <property type="entry name" value="rRNA_lsu_MTrfase_RlmN/Cfr"/>
</dbReference>
<dbReference type="InterPro" id="IPR007197">
    <property type="entry name" value="rSAM"/>
</dbReference>
<dbReference type="NCBIfam" id="TIGR00048">
    <property type="entry name" value="rRNA_mod_RlmN"/>
    <property type="match status" value="1"/>
</dbReference>
<dbReference type="PANTHER" id="PTHR30544">
    <property type="entry name" value="23S RRNA METHYLTRANSFERASE"/>
    <property type="match status" value="1"/>
</dbReference>
<dbReference type="PANTHER" id="PTHR30544:SF5">
    <property type="entry name" value="RADICAL SAM CORE DOMAIN-CONTAINING PROTEIN"/>
    <property type="match status" value="1"/>
</dbReference>
<dbReference type="Pfam" id="PF04055">
    <property type="entry name" value="Radical_SAM"/>
    <property type="match status" value="1"/>
</dbReference>
<dbReference type="Pfam" id="PF21016">
    <property type="entry name" value="RlmN_N"/>
    <property type="match status" value="1"/>
</dbReference>
<dbReference type="PIRSF" id="PIRSF006004">
    <property type="entry name" value="CHP00048"/>
    <property type="match status" value="1"/>
</dbReference>
<dbReference type="SFLD" id="SFLDF00275">
    <property type="entry name" value="adenosine_C2_methyltransferase"/>
    <property type="match status" value="1"/>
</dbReference>
<dbReference type="SFLD" id="SFLDG01062">
    <property type="entry name" value="methyltransferase_(Class_A)"/>
    <property type="match status" value="1"/>
</dbReference>
<dbReference type="SUPFAM" id="SSF102114">
    <property type="entry name" value="Radical SAM enzymes"/>
    <property type="match status" value="1"/>
</dbReference>
<dbReference type="PROSITE" id="PS51918">
    <property type="entry name" value="RADICAL_SAM"/>
    <property type="match status" value="1"/>
</dbReference>
<reference key="1">
    <citation type="journal article" date="2001" name="Proc. Natl. Acad. Sci. U.S.A.">
        <title>Complete genome sequence of Caulobacter crescentus.</title>
        <authorList>
            <person name="Nierman W.C."/>
            <person name="Feldblyum T.V."/>
            <person name="Laub M.T."/>
            <person name="Paulsen I.T."/>
            <person name="Nelson K.E."/>
            <person name="Eisen J.A."/>
            <person name="Heidelberg J.F."/>
            <person name="Alley M.R.K."/>
            <person name="Ohta N."/>
            <person name="Maddock J.R."/>
            <person name="Potocka I."/>
            <person name="Nelson W.C."/>
            <person name="Newton A."/>
            <person name="Stephens C."/>
            <person name="Phadke N.D."/>
            <person name="Ely B."/>
            <person name="DeBoy R.T."/>
            <person name="Dodson R.J."/>
            <person name="Durkin A.S."/>
            <person name="Gwinn M.L."/>
            <person name="Haft D.H."/>
            <person name="Kolonay J.F."/>
            <person name="Smit J."/>
            <person name="Craven M.B."/>
            <person name="Khouri H.M."/>
            <person name="Shetty J."/>
            <person name="Berry K.J."/>
            <person name="Utterback T.R."/>
            <person name="Tran K."/>
            <person name="Wolf A.M."/>
            <person name="Vamathevan J.J."/>
            <person name="Ermolaeva M.D."/>
            <person name="White O."/>
            <person name="Salzberg S.L."/>
            <person name="Venter J.C."/>
            <person name="Shapiro L."/>
            <person name="Fraser C.M."/>
        </authorList>
    </citation>
    <scope>NUCLEOTIDE SEQUENCE [LARGE SCALE GENOMIC DNA]</scope>
    <source>
        <strain>ATCC 19089 / CIP 103742 / CB 15</strain>
    </source>
</reference>
<protein>
    <recommendedName>
        <fullName evidence="1">Dual-specificity RNA methyltransferase RlmN</fullName>
        <ecNumber evidence="1">2.1.1.192</ecNumber>
    </recommendedName>
    <alternativeName>
        <fullName evidence="1">23S rRNA (adenine(2503)-C(2))-methyltransferase</fullName>
    </alternativeName>
    <alternativeName>
        <fullName evidence="1">23S rRNA m2A2503 methyltransferase</fullName>
    </alternativeName>
    <alternativeName>
        <fullName evidence="1">Ribosomal RNA large subunit methyltransferase N</fullName>
    </alternativeName>
    <alternativeName>
        <fullName evidence="1">tRNA (adenine(37)-C(2))-methyltransferase</fullName>
    </alternativeName>
    <alternativeName>
        <fullName evidence="1">tRNA m2A37 methyltransferase</fullName>
    </alternativeName>
</protein>
<gene>
    <name evidence="1" type="primary">rlmN</name>
    <name type="ordered locus">CC_0134</name>
</gene>
<accession>Q9ABT6</accession>
<comment type="function">
    <text evidence="1">Specifically methylates position 2 of adenine 2503 in 23S rRNA and position 2 of adenine 37 in tRNAs. m2A2503 modification seems to play a crucial role in the proofreading step occurring at the peptidyl transferase center and thus would serve to optimize ribosomal fidelity.</text>
</comment>
<comment type="catalytic activity">
    <reaction evidence="1">
        <text>adenosine(2503) in 23S rRNA + 2 reduced [2Fe-2S]-[ferredoxin] + 2 S-adenosyl-L-methionine = 2-methyladenosine(2503) in 23S rRNA + 5'-deoxyadenosine + L-methionine + 2 oxidized [2Fe-2S]-[ferredoxin] + S-adenosyl-L-homocysteine</text>
        <dbReference type="Rhea" id="RHEA:42916"/>
        <dbReference type="Rhea" id="RHEA-COMP:10000"/>
        <dbReference type="Rhea" id="RHEA-COMP:10001"/>
        <dbReference type="Rhea" id="RHEA-COMP:10152"/>
        <dbReference type="Rhea" id="RHEA-COMP:10282"/>
        <dbReference type="ChEBI" id="CHEBI:17319"/>
        <dbReference type="ChEBI" id="CHEBI:33737"/>
        <dbReference type="ChEBI" id="CHEBI:33738"/>
        <dbReference type="ChEBI" id="CHEBI:57844"/>
        <dbReference type="ChEBI" id="CHEBI:57856"/>
        <dbReference type="ChEBI" id="CHEBI:59789"/>
        <dbReference type="ChEBI" id="CHEBI:74411"/>
        <dbReference type="ChEBI" id="CHEBI:74497"/>
        <dbReference type="EC" id="2.1.1.192"/>
    </reaction>
</comment>
<comment type="catalytic activity">
    <reaction evidence="1">
        <text>adenosine(37) in tRNA + 2 reduced [2Fe-2S]-[ferredoxin] + 2 S-adenosyl-L-methionine = 2-methyladenosine(37) in tRNA + 5'-deoxyadenosine + L-methionine + 2 oxidized [2Fe-2S]-[ferredoxin] + S-adenosyl-L-homocysteine</text>
        <dbReference type="Rhea" id="RHEA:43332"/>
        <dbReference type="Rhea" id="RHEA-COMP:10000"/>
        <dbReference type="Rhea" id="RHEA-COMP:10001"/>
        <dbReference type="Rhea" id="RHEA-COMP:10162"/>
        <dbReference type="Rhea" id="RHEA-COMP:10485"/>
        <dbReference type="ChEBI" id="CHEBI:17319"/>
        <dbReference type="ChEBI" id="CHEBI:33737"/>
        <dbReference type="ChEBI" id="CHEBI:33738"/>
        <dbReference type="ChEBI" id="CHEBI:57844"/>
        <dbReference type="ChEBI" id="CHEBI:57856"/>
        <dbReference type="ChEBI" id="CHEBI:59789"/>
        <dbReference type="ChEBI" id="CHEBI:74411"/>
        <dbReference type="ChEBI" id="CHEBI:74497"/>
        <dbReference type="EC" id="2.1.1.192"/>
    </reaction>
</comment>
<comment type="cofactor">
    <cofactor evidence="1">
        <name>[4Fe-4S] cluster</name>
        <dbReference type="ChEBI" id="CHEBI:49883"/>
    </cofactor>
    <text evidence="1">Binds 1 [4Fe-4S] cluster. The cluster is coordinated with 3 cysteines and an exchangeable S-adenosyl-L-methionine.</text>
</comment>
<comment type="subcellular location">
    <subcellularLocation>
        <location evidence="1">Cytoplasm</location>
    </subcellularLocation>
</comment>
<comment type="miscellaneous">
    <text evidence="1">Reaction proceeds by a ping-pong mechanism involving intermediate methylation of a conserved cysteine residue.</text>
</comment>
<comment type="similarity">
    <text evidence="1">Belongs to the radical SAM superfamily. RlmN family.</text>
</comment>